<reference key="1">
    <citation type="journal article" date="2011" name="Proc. Natl. Acad. Sci. U.S.A.">
        <title>Obligate biotrophy features unraveled by the genomic analysis of rust fungi.</title>
        <authorList>
            <person name="Duplessis S."/>
            <person name="Cuomo C.A."/>
            <person name="Lin Y.-C."/>
            <person name="Aerts A."/>
            <person name="Tisserant E."/>
            <person name="Veneault-Fourrey C."/>
            <person name="Joly D.L."/>
            <person name="Hacquard S."/>
            <person name="Amselem J."/>
            <person name="Cantarel B.L."/>
            <person name="Chiu R."/>
            <person name="Coutinho P.M."/>
            <person name="Feau N."/>
            <person name="Field M."/>
            <person name="Frey P."/>
            <person name="Gelhaye E."/>
            <person name="Goldberg J."/>
            <person name="Grabherr M.G."/>
            <person name="Kodira C.D."/>
            <person name="Kohler A."/>
            <person name="Kuees U."/>
            <person name="Lindquist E.A."/>
            <person name="Lucas S.M."/>
            <person name="Mago R."/>
            <person name="Mauceli E."/>
            <person name="Morin E."/>
            <person name="Murat C."/>
            <person name="Pangilinan J.L."/>
            <person name="Park R."/>
            <person name="Pearson M."/>
            <person name="Quesneville H."/>
            <person name="Rouhier N."/>
            <person name="Sakthikumar S."/>
            <person name="Salamov A.A."/>
            <person name="Schmutz J."/>
            <person name="Selles B."/>
            <person name="Shapiro H."/>
            <person name="Tanguay P."/>
            <person name="Tuskan G.A."/>
            <person name="Henrissat B."/>
            <person name="Van de Peer Y."/>
            <person name="Rouze P."/>
            <person name="Ellis J.G."/>
            <person name="Dodds P.N."/>
            <person name="Schein J.E."/>
            <person name="Zhong S."/>
            <person name="Hamelin R.C."/>
            <person name="Grigoriev I.V."/>
            <person name="Szabo L.J."/>
            <person name="Martin F."/>
        </authorList>
    </citation>
    <scope>NUCLEOTIDE SEQUENCE [LARGE SCALE GENOMIC DNA]</scope>
    <scope>IDENTIFICATION</scope>
    <source>
        <strain>98AG31 / pathotype 3-4-7</strain>
    </source>
</reference>
<reference key="2">
    <citation type="journal article" date="2010" name="BMC Genomics">
        <title>Comparative analysis of secreted protein evolution using expressed sequence tags from four poplar leaf rusts (Melampsora spp.).</title>
        <authorList>
            <person name="Joly D.L."/>
            <person name="Feau N."/>
            <person name="Tanguay P."/>
            <person name="Hamelin R.C."/>
        </authorList>
    </citation>
    <scope>INDUCTION</scope>
</reference>
<reference key="3">
    <citation type="journal article" date="2012" name="Mol. Plant Microbe Interact.">
        <title>A comprehensive analysis of genes encoding small secreted proteins identifies candidate effectors in Melampsora larici-populina (poplar leaf rust).</title>
        <authorList>
            <person name="Hacquard S."/>
            <person name="Joly D.L."/>
            <person name="Lin Y.C."/>
            <person name="Tisserant E."/>
            <person name="Feau N."/>
            <person name="Delaruelle C."/>
            <person name="Legue V."/>
            <person name="Kohler A."/>
            <person name="Tanguay P."/>
            <person name="Petre B."/>
            <person name="Frey P."/>
            <person name="Van de Peer Y."/>
            <person name="Rouze P."/>
            <person name="Martin F."/>
            <person name="Hamelin R.C."/>
            <person name="Duplessis S."/>
        </authorList>
    </citation>
    <scope>INDUCTION</scope>
    <scope>SUBCELLULAR LOCATION</scope>
</reference>
<reference key="4">
    <citation type="journal article" date="2018" name="Mol. Plant Pathol.">
        <title>Infection assays in Arabidopsis reveal candidate effectors from the poplar rust fungus that promote susceptibility to bacteria and oomycete pathogens.</title>
        <authorList>
            <person name="Germain H."/>
            <person name="Joly D.L."/>
            <person name="Mireault C."/>
            <person name="Plourde M.B."/>
            <person name="Letanneur C."/>
            <person name="Stewart D."/>
            <person name="Morency M.J."/>
            <person name="Petre B."/>
            <person name="Duplessis S."/>
            <person name="Seguin A."/>
        </authorList>
    </citation>
    <scope>FUNCTION</scope>
    <scope>SUBCELLULAR LOCATION</scope>
</reference>
<evidence type="ECO:0000255" key="1"/>
<evidence type="ECO:0000269" key="2">
    <source>
    </source>
</evidence>
<evidence type="ECO:0000269" key="3">
    <source>
    </source>
</evidence>
<evidence type="ECO:0000269" key="4">
    <source>
    </source>
</evidence>
<evidence type="ECO:0000303" key="5">
    <source>
    </source>
</evidence>
<evidence type="ECO:0000303" key="6">
    <source>
    </source>
</evidence>
<evidence type="ECO:0000305" key="7"/>
<dbReference type="EMBL" id="GL883095">
    <property type="protein sequence ID" value="EGG10221.1"/>
    <property type="molecule type" value="Genomic_DNA"/>
</dbReference>
<dbReference type="RefSeq" id="XP_007406522.1">
    <property type="nucleotide sequence ID" value="XM_007406460.1"/>
</dbReference>
<dbReference type="EnsemblFungi" id="EGG10221">
    <property type="protein sequence ID" value="EGG10221"/>
    <property type="gene ID" value="MELLADRAFT_124499"/>
</dbReference>
<dbReference type="GeneID" id="18926786"/>
<dbReference type="KEGG" id="mlr:MELLADRAFT_124499"/>
<dbReference type="VEuPathDB" id="FungiDB:MELLADRAFT_124499"/>
<dbReference type="HOGENOM" id="CLU_198490_1_0_1"/>
<dbReference type="InParanoid" id="F4RC55"/>
<dbReference type="Proteomes" id="UP000001072">
    <property type="component" value="Unassembled WGS sequence"/>
</dbReference>
<dbReference type="GO" id="GO:0005576">
    <property type="term" value="C:extracellular region"/>
    <property type="evidence" value="ECO:0007669"/>
    <property type="project" value="UniProtKB-SubCell"/>
</dbReference>
<dbReference type="GO" id="GO:0043657">
    <property type="term" value="C:host cell"/>
    <property type="evidence" value="ECO:0007669"/>
    <property type="project" value="UniProtKB-SubCell"/>
</dbReference>
<dbReference type="GO" id="GO:0030430">
    <property type="term" value="C:host cell cytoplasm"/>
    <property type="evidence" value="ECO:0007669"/>
    <property type="project" value="UniProtKB-SubCell"/>
</dbReference>
<dbReference type="GO" id="GO:0042025">
    <property type="term" value="C:host cell nucleus"/>
    <property type="evidence" value="ECO:0007669"/>
    <property type="project" value="UniProtKB-SubCell"/>
</dbReference>
<protein>
    <recommendedName>
        <fullName evidence="6">Candidate secreted effector protein MPL124499</fullName>
        <shortName evidence="6">CSEP MPL124499</shortName>
    </recommendedName>
    <alternativeName>
        <fullName evidence="5">Small secreted protein MPL124499</fullName>
        <shortName evidence="5">SSP MPL124499</shortName>
    </alternativeName>
</protein>
<feature type="signal peptide" evidence="1">
    <location>
        <begin position="1"/>
        <end position="21"/>
    </location>
</feature>
<feature type="chain" id="PRO_5003320713" description="Candidate secreted effector protein MPL124499">
    <location>
        <begin position="22"/>
        <end position="72"/>
    </location>
</feature>
<sequence>MKLSIFAAIFMAFVSLNQVFGSMTHSVKSKEAIISADESLVKPIDAGQAQPEGCPVCARLGVLCPYHYRADS</sequence>
<gene>
    <name type="ORF">MELLADRAFT_124499</name>
    <name type="ORF">MPL124499</name>
</gene>
<accession>F4RC55</accession>
<comment type="function">
    <text evidence="4">Rust effector delivered into infected tissues to modulate host functions and contribute to pathogen virulence (PubMed:27868319). Enhances leaf colonization by the bacteria Pseudomonas syringae and the oomycete Hyaloperonospora arabidopsidis pathogens in an Arabidopsis thaliana infection model (PubMed:27868319).</text>
</comment>
<comment type="subcellular location">
    <subcellularLocation>
        <location evidence="3">Secreted</location>
    </subcellularLocation>
    <subcellularLocation>
        <location evidence="3">Host cell</location>
    </subcellularLocation>
    <subcellularLocation>
        <location evidence="4">Host cytoplasm</location>
    </subcellularLocation>
    <subcellularLocation>
        <location evidence="4">Host nucleus</location>
    </subcellularLocation>
</comment>
<comment type="induction">
    <text evidence="2 3">Expression is induced during host infection.</text>
</comment>
<comment type="similarity">
    <text evidence="7">Belongs to the CPGH1 family.</text>
</comment>
<proteinExistence type="evidence at transcript level"/>
<name>CSEPC_MELLP</name>
<keyword id="KW-1035">Host cytoplasm</keyword>
<keyword id="KW-1048">Host nucleus</keyword>
<keyword id="KW-1185">Reference proteome</keyword>
<keyword id="KW-0964">Secreted</keyword>
<keyword id="KW-0732">Signal</keyword>
<keyword id="KW-0843">Virulence</keyword>
<organism>
    <name type="scientific">Melampsora larici-populina (strain 98AG31 / pathotype 3-4-7)</name>
    <name type="common">Poplar leaf rust fungus</name>
    <dbReference type="NCBI Taxonomy" id="747676"/>
    <lineage>
        <taxon>Eukaryota</taxon>
        <taxon>Fungi</taxon>
        <taxon>Dikarya</taxon>
        <taxon>Basidiomycota</taxon>
        <taxon>Pucciniomycotina</taxon>
        <taxon>Pucciniomycetes</taxon>
        <taxon>Pucciniales</taxon>
        <taxon>Melampsoraceae</taxon>
        <taxon>Melampsora</taxon>
    </lineage>
</organism>